<comment type="subcellular location">
    <subcellularLocation>
        <location evidence="1">Cell membrane</location>
        <topology evidence="1">Lipid-anchor</topology>
    </subcellularLocation>
</comment>
<comment type="similarity">
    <text evidence="2">Belongs to the staphylococcal tandem lipoprotein family.</text>
</comment>
<evidence type="ECO:0000255" key="1">
    <source>
        <dbReference type="PROSITE-ProRule" id="PRU00303"/>
    </source>
</evidence>
<evidence type="ECO:0000305" key="2"/>
<name>Y097_STAAM</name>
<gene>
    <name type="ordered locus">SAV0097</name>
</gene>
<reference key="1">
    <citation type="journal article" date="2001" name="Lancet">
        <title>Whole genome sequencing of meticillin-resistant Staphylococcus aureus.</title>
        <authorList>
            <person name="Kuroda M."/>
            <person name="Ohta T."/>
            <person name="Uchiyama I."/>
            <person name="Baba T."/>
            <person name="Yuzawa H."/>
            <person name="Kobayashi I."/>
            <person name="Cui L."/>
            <person name="Oguchi A."/>
            <person name="Aoki K."/>
            <person name="Nagai Y."/>
            <person name="Lian J.-Q."/>
            <person name="Ito T."/>
            <person name="Kanamori M."/>
            <person name="Matsumaru H."/>
            <person name="Maruyama A."/>
            <person name="Murakami H."/>
            <person name="Hosoyama A."/>
            <person name="Mizutani-Ui Y."/>
            <person name="Takahashi N.K."/>
            <person name="Sawano T."/>
            <person name="Inoue R."/>
            <person name="Kaito C."/>
            <person name="Sekimizu K."/>
            <person name="Hirakawa H."/>
            <person name="Kuhara S."/>
            <person name="Goto S."/>
            <person name="Yabuzaki J."/>
            <person name="Kanehisa M."/>
            <person name="Yamashita A."/>
            <person name="Oshima K."/>
            <person name="Furuya K."/>
            <person name="Yoshino C."/>
            <person name="Shiba T."/>
            <person name="Hattori M."/>
            <person name="Ogasawara N."/>
            <person name="Hayashi H."/>
            <person name="Hiramatsu K."/>
        </authorList>
    </citation>
    <scope>NUCLEOTIDE SEQUENCE [LARGE SCALE GENOMIC DNA]</scope>
    <source>
        <strain>Mu50 / ATCC 700699</strain>
    </source>
</reference>
<protein>
    <recommendedName>
        <fullName>Uncharacterized lipoprotein SAV0097</fullName>
    </recommendedName>
</protein>
<accession>Q99XB5</accession>
<proteinExistence type="inferred from homology"/>
<sequence length="256" mass="29880">MIKRVNKLVLGISFLFLIISIFAGCGTGKEAEIKKSFEKTLSMYPIKNLEDLYDKEGYRDDQFDKNDKGTWIVRSSMSIQSNGKDMNIKGMVLYMNRNTRTTNGYYYVDVIEREDKGIHRDNEKRYPVKMVDNKIIPTKEIKDEKIKKEIENFKFFVQYGDFKDLSKYKDGDISYNPEVPSYSAKYQLTNDDYNVKQLRKRYNIPTNKAPKLLLKGTGNLKGSSIGYKKIEFTFVEKKGENIYFSDGLHFNPSEDK</sequence>
<keyword id="KW-1003">Cell membrane</keyword>
<keyword id="KW-0449">Lipoprotein</keyword>
<keyword id="KW-0472">Membrane</keyword>
<keyword id="KW-0564">Palmitate</keyword>
<keyword id="KW-0732">Signal</keyword>
<feature type="signal peptide" evidence="1">
    <location>
        <begin position="1"/>
        <end position="24"/>
    </location>
</feature>
<feature type="chain" id="PRO_0000282114" description="Uncharacterized lipoprotein SAV0097">
    <location>
        <begin position="25"/>
        <end position="256"/>
    </location>
</feature>
<feature type="lipid moiety-binding region" description="N-palmitoyl cysteine" evidence="1">
    <location>
        <position position="25"/>
    </location>
</feature>
<feature type="lipid moiety-binding region" description="S-diacylglycerol cysteine" evidence="1">
    <location>
        <position position="25"/>
    </location>
</feature>
<dbReference type="EMBL" id="BA000017">
    <property type="protein sequence ID" value="BAB56259.1"/>
    <property type="molecule type" value="Genomic_DNA"/>
</dbReference>
<dbReference type="RefSeq" id="WP_000597207.1">
    <property type="nucleotide sequence ID" value="NC_002758.2"/>
</dbReference>
<dbReference type="SMR" id="Q99XB5"/>
<dbReference type="DNASU" id="1120056"/>
<dbReference type="KEGG" id="sav:SAV0097"/>
<dbReference type="HOGENOM" id="CLU_071589_0_1_9"/>
<dbReference type="PhylomeDB" id="Q99XB5"/>
<dbReference type="Proteomes" id="UP000002481">
    <property type="component" value="Chromosome"/>
</dbReference>
<dbReference type="GO" id="GO:0005886">
    <property type="term" value="C:plasma membrane"/>
    <property type="evidence" value="ECO:0007669"/>
    <property type="project" value="UniProtKB-SubCell"/>
</dbReference>
<dbReference type="Gene3D" id="2.50.20.40">
    <property type="match status" value="1"/>
</dbReference>
<dbReference type="InterPro" id="IPR007595">
    <property type="entry name" value="Csa"/>
</dbReference>
<dbReference type="InterPro" id="IPR038641">
    <property type="entry name" value="Csa_sf"/>
</dbReference>
<dbReference type="NCBIfam" id="TIGR01742">
    <property type="entry name" value="SA_tandem_lipo"/>
    <property type="match status" value="1"/>
</dbReference>
<dbReference type="Pfam" id="PF04507">
    <property type="entry name" value="DUF576"/>
    <property type="match status" value="1"/>
</dbReference>
<dbReference type="PROSITE" id="PS51257">
    <property type="entry name" value="PROKAR_LIPOPROTEIN"/>
    <property type="match status" value="1"/>
</dbReference>
<organism>
    <name type="scientific">Staphylococcus aureus (strain Mu50 / ATCC 700699)</name>
    <dbReference type="NCBI Taxonomy" id="158878"/>
    <lineage>
        <taxon>Bacteria</taxon>
        <taxon>Bacillati</taxon>
        <taxon>Bacillota</taxon>
        <taxon>Bacilli</taxon>
        <taxon>Bacillales</taxon>
        <taxon>Staphylococcaceae</taxon>
        <taxon>Staphylococcus</taxon>
    </lineage>
</organism>